<name>RL1_STAA2</name>
<reference key="1">
    <citation type="submission" date="2007-06" db="EMBL/GenBank/DDBJ databases">
        <title>Complete sequence of chromosome of Staphylococcus aureus subsp. aureus JH1.</title>
        <authorList>
            <consortium name="US DOE Joint Genome Institute"/>
            <person name="Copeland A."/>
            <person name="Lucas S."/>
            <person name="Lapidus A."/>
            <person name="Barry K."/>
            <person name="Detter J.C."/>
            <person name="Glavina del Rio T."/>
            <person name="Hammon N."/>
            <person name="Israni S."/>
            <person name="Dalin E."/>
            <person name="Tice H."/>
            <person name="Pitluck S."/>
            <person name="Chain P."/>
            <person name="Malfatti S."/>
            <person name="Shin M."/>
            <person name="Vergez L."/>
            <person name="Schmutz J."/>
            <person name="Larimer F."/>
            <person name="Land M."/>
            <person name="Hauser L."/>
            <person name="Kyrpides N."/>
            <person name="Ivanova N."/>
            <person name="Tomasz A."/>
            <person name="Richardson P."/>
        </authorList>
    </citation>
    <scope>NUCLEOTIDE SEQUENCE [LARGE SCALE GENOMIC DNA]</scope>
    <source>
        <strain>JH1</strain>
    </source>
</reference>
<dbReference type="EMBL" id="CP000736">
    <property type="protein sequence ID" value="ABR51433.1"/>
    <property type="molecule type" value="Genomic_DNA"/>
</dbReference>
<dbReference type="SMR" id="A6TZ15"/>
<dbReference type="KEGG" id="sah:SaurJH1_0575"/>
<dbReference type="HOGENOM" id="CLU_062853_0_0_9"/>
<dbReference type="GO" id="GO:0015934">
    <property type="term" value="C:large ribosomal subunit"/>
    <property type="evidence" value="ECO:0007669"/>
    <property type="project" value="InterPro"/>
</dbReference>
<dbReference type="GO" id="GO:0019843">
    <property type="term" value="F:rRNA binding"/>
    <property type="evidence" value="ECO:0007669"/>
    <property type="project" value="UniProtKB-UniRule"/>
</dbReference>
<dbReference type="GO" id="GO:0003735">
    <property type="term" value="F:structural constituent of ribosome"/>
    <property type="evidence" value="ECO:0007669"/>
    <property type="project" value="InterPro"/>
</dbReference>
<dbReference type="GO" id="GO:0000049">
    <property type="term" value="F:tRNA binding"/>
    <property type="evidence" value="ECO:0007669"/>
    <property type="project" value="UniProtKB-KW"/>
</dbReference>
<dbReference type="GO" id="GO:0006417">
    <property type="term" value="P:regulation of translation"/>
    <property type="evidence" value="ECO:0007669"/>
    <property type="project" value="UniProtKB-KW"/>
</dbReference>
<dbReference type="GO" id="GO:0006412">
    <property type="term" value="P:translation"/>
    <property type="evidence" value="ECO:0007669"/>
    <property type="project" value="UniProtKB-UniRule"/>
</dbReference>
<dbReference type="CDD" id="cd00403">
    <property type="entry name" value="Ribosomal_L1"/>
    <property type="match status" value="1"/>
</dbReference>
<dbReference type="FunFam" id="3.40.50.790:FF:000001">
    <property type="entry name" value="50S ribosomal protein L1"/>
    <property type="match status" value="1"/>
</dbReference>
<dbReference type="Gene3D" id="3.30.190.20">
    <property type="match status" value="1"/>
</dbReference>
<dbReference type="Gene3D" id="3.40.50.790">
    <property type="match status" value="1"/>
</dbReference>
<dbReference type="HAMAP" id="MF_01318_B">
    <property type="entry name" value="Ribosomal_uL1_B"/>
    <property type="match status" value="1"/>
</dbReference>
<dbReference type="InterPro" id="IPR005878">
    <property type="entry name" value="Ribosom_uL1_bac-type"/>
</dbReference>
<dbReference type="InterPro" id="IPR002143">
    <property type="entry name" value="Ribosomal_uL1"/>
</dbReference>
<dbReference type="InterPro" id="IPR023674">
    <property type="entry name" value="Ribosomal_uL1-like"/>
</dbReference>
<dbReference type="InterPro" id="IPR028364">
    <property type="entry name" value="Ribosomal_uL1/biogenesis"/>
</dbReference>
<dbReference type="InterPro" id="IPR016095">
    <property type="entry name" value="Ribosomal_uL1_3-a/b-sand"/>
</dbReference>
<dbReference type="InterPro" id="IPR023673">
    <property type="entry name" value="Ribosomal_uL1_CS"/>
</dbReference>
<dbReference type="NCBIfam" id="TIGR01169">
    <property type="entry name" value="rplA_bact"/>
    <property type="match status" value="1"/>
</dbReference>
<dbReference type="PANTHER" id="PTHR36427">
    <property type="entry name" value="54S RIBOSOMAL PROTEIN L1, MITOCHONDRIAL"/>
    <property type="match status" value="1"/>
</dbReference>
<dbReference type="PANTHER" id="PTHR36427:SF3">
    <property type="entry name" value="LARGE RIBOSOMAL SUBUNIT PROTEIN UL1M"/>
    <property type="match status" value="1"/>
</dbReference>
<dbReference type="Pfam" id="PF00687">
    <property type="entry name" value="Ribosomal_L1"/>
    <property type="match status" value="1"/>
</dbReference>
<dbReference type="PIRSF" id="PIRSF002155">
    <property type="entry name" value="Ribosomal_L1"/>
    <property type="match status" value="1"/>
</dbReference>
<dbReference type="SUPFAM" id="SSF56808">
    <property type="entry name" value="Ribosomal protein L1"/>
    <property type="match status" value="1"/>
</dbReference>
<dbReference type="PROSITE" id="PS01199">
    <property type="entry name" value="RIBOSOMAL_L1"/>
    <property type="match status" value="1"/>
</dbReference>
<evidence type="ECO:0000255" key="1">
    <source>
        <dbReference type="HAMAP-Rule" id="MF_01318"/>
    </source>
</evidence>
<evidence type="ECO:0000305" key="2"/>
<keyword id="KW-0678">Repressor</keyword>
<keyword id="KW-0687">Ribonucleoprotein</keyword>
<keyword id="KW-0689">Ribosomal protein</keyword>
<keyword id="KW-0694">RNA-binding</keyword>
<keyword id="KW-0699">rRNA-binding</keyword>
<keyword id="KW-0810">Translation regulation</keyword>
<keyword id="KW-0820">tRNA-binding</keyword>
<accession>A6TZ15</accession>
<proteinExistence type="inferred from homology"/>
<gene>
    <name evidence="1" type="primary">rplA</name>
    <name type="ordered locus">SaurJH1_0575</name>
</gene>
<protein>
    <recommendedName>
        <fullName evidence="1">Large ribosomal subunit protein uL1</fullName>
    </recommendedName>
    <alternativeName>
        <fullName evidence="2">50S ribosomal protein L1</fullName>
    </alternativeName>
</protein>
<comment type="function">
    <text evidence="1">Binds directly to 23S rRNA. The L1 stalk is quite mobile in the ribosome, and is involved in E site tRNA release.</text>
</comment>
<comment type="function">
    <text evidence="1">Protein L1 is also a translational repressor protein, it controls the translation of the L11 operon by binding to its mRNA.</text>
</comment>
<comment type="subunit">
    <text evidence="1">Part of the 50S ribosomal subunit.</text>
</comment>
<comment type="similarity">
    <text evidence="1">Belongs to the universal ribosomal protein uL1 family.</text>
</comment>
<feature type="chain" id="PRO_1000086310" description="Large ribosomal subunit protein uL1">
    <location>
        <begin position="1"/>
        <end position="230"/>
    </location>
</feature>
<sequence>MAKKGKKYQEAASKVDRTQHYSVEEAIKLAKETSIANFDASVEVAFRLGIDTRKNDQQIRGAVVLPNGTGKSQSVLVFAKGDKIAEAEAAGADYVGEAEYVQKIQQGWFDFDVVVATPDMMGEVGKLGRVLGPKGLMPNPKTGTVTMDVKKAVEEIKAGKVEYRAEKAGIVHASIGKVSFTDEQLIENFNTLQDVLAKAKPSSAKGTYFKSVAVTTTMGPGVKIDTASFK</sequence>
<organism>
    <name type="scientific">Staphylococcus aureus (strain JH1)</name>
    <dbReference type="NCBI Taxonomy" id="359787"/>
    <lineage>
        <taxon>Bacteria</taxon>
        <taxon>Bacillati</taxon>
        <taxon>Bacillota</taxon>
        <taxon>Bacilli</taxon>
        <taxon>Bacillales</taxon>
        <taxon>Staphylococcaceae</taxon>
        <taxon>Staphylococcus</taxon>
    </lineage>
</organism>